<proteinExistence type="evidence at transcript level"/>
<gene>
    <name evidence="4" type="primary">DCI1</name>
    <name type="ORF">MGG_00359</name>
</gene>
<protein>
    <recommendedName>
        <fullName evidence="4">Delta(3,5)-Delta(2,4)-dienoyl-CoA isomerase</fullName>
        <ecNumber evidence="6">5.3.3.21</ecNumber>
    </recommendedName>
    <alternativeName>
        <fullName evidence="2">Peroxisomal di-isomerase DCI1</fullName>
    </alternativeName>
</protein>
<keyword id="KW-0963">Cytoplasm</keyword>
<keyword id="KW-0413">Isomerase</keyword>
<keyword id="KW-0576">Peroxisome</keyword>
<keyword id="KW-1185">Reference proteome</keyword>
<keyword id="KW-0843">Virulence</keyword>
<evidence type="ECO:0000250" key="1">
    <source>
        <dbReference type="UniProtKB" id="Q05871"/>
    </source>
</evidence>
<evidence type="ECO:0000250" key="2">
    <source>
        <dbReference type="UniProtKB" id="Q08558"/>
    </source>
</evidence>
<evidence type="ECO:0000269" key="3">
    <source>
    </source>
</evidence>
<evidence type="ECO:0000303" key="4">
    <source>
    </source>
</evidence>
<evidence type="ECO:0000305" key="5"/>
<evidence type="ECO:0000305" key="6">
    <source>
    </source>
</evidence>
<name>DCI1_PYRO7</name>
<feature type="chain" id="PRO_0000462290" description="Delta(3,5)-Delta(2,4)-dienoyl-CoA isomerase">
    <location>
        <begin position="1"/>
        <end position="280"/>
    </location>
</feature>
<feature type="short sequence motif" description="Peroxisome targeting signal (PTS1)" evidence="2">
    <location>
        <begin position="278"/>
        <end position="280"/>
    </location>
</feature>
<feature type="active site" description="Proton donor/acceptor" evidence="1">
    <location>
        <position position="154"/>
    </location>
</feature>
<comment type="function">
    <text evidence="3">Peroxisomal di-isomerase that is involved in fatty acid metabolism enzyme by converting 3,5-dienoyl-CoAs to the corresponding 2,4-dienoyl-CoAs (PubMed:36774535). Involved in fatty acid beta-oxidation, which is important for lipid droplets degradation and infectious growth (PubMed:36774535).</text>
</comment>
<comment type="catalytic activity">
    <reaction evidence="2">
        <text>a (3E,5Z)-dienoyl-CoA = a (2E,4E)-(5,6-saturated)-dienoyl-CoA</text>
        <dbReference type="Rhea" id="RHEA:45240"/>
        <dbReference type="ChEBI" id="CHEBI:85110"/>
        <dbReference type="ChEBI" id="CHEBI:85111"/>
        <dbReference type="EC" id="5.3.3.21"/>
    </reaction>
    <physiologicalReaction direction="left-to-right" evidence="2">
        <dbReference type="Rhea" id="RHEA:45241"/>
    </physiologicalReaction>
</comment>
<comment type="pathway">
    <text evidence="3">Lipid metabolism; fatty acid beta-oxidation.</text>
</comment>
<comment type="subcellular location">
    <subcellularLocation>
        <location evidence="3">Cytoplasm</location>
        <location evidence="3">Cytosol</location>
    </subcellularLocation>
    <subcellularLocation>
        <location evidence="3">Peroxisome</location>
    </subcellularLocation>
    <text evidence="3">Mainly distributed in the cytosol in vegetative hyphae and conidia but localizes in peroxisomes in appressoria and infectious hyphae.</text>
</comment>
<comment type="induction">
    <text evidence="3">Expression is regulated by the transcription factor MSN2.</text>
</comment>
<comment type="disruption phenotype">
    <text evidence="3">Leads to reduced virulence with smaller lesions with restricted growth of infectious hyphae and fewer blast lesions and green islands on barley leaves (PubMed:36774535). Does not affect vegetative growth, conidium production, and appressorium formation but shows defects in long-chain (oleate and olive oil) fatty acids oxidation (PubMed:36774535). Results in fewer peroxisomes, more lipid droplets, and higher levels of phosphatidylglycerol, phosphatidylinositol, diacylglycerol, triacylglycerol and free fatty acids (PubMed:36774535).</text>
</comment>
<comment type="similarity">
    <text evidence="5">Belongs to the enoyl-CoA hydratase/isomerase family.</text>
</comment>
<accession>G4NCP4</accession>
<reference key="1">
    <citation type="journal article" date="2005" name="Nature">
        <title>The genome sequence of the rice blast fungus Magnaporthe grisea.</title>
        <authorList>
            <person name="Dean R.A."/>
            <person name="Talbot N.J."/>
            <person name="Ebbole D.J."/>
            <person name="Farman M.L."/>
            <person name="Mitchell T.K."/>
            <person name="Orbach M.J."/>
            <person name="Thon M.R."/>
            <person name="Kulkarni R."/>
            <person name="Xu J.-R."/>
            <person name="Pan H."/>
            <person name="Read N.D."/>
            <person name="Lee Y.-H."/>
            <person name="Carbone I."/>
            <person name="Brown D."/>
            <person name="Oh Y.Y."/>
            <person name="Donofrio N."/>
            <person name="Jeong J.S."/>
            <person name="Soanes D.M."/>
            <person name="Djonovic S."/>
            <person name="Kolomiets E."/>
            <person name="Rehmeyer C."/>
            <person name="Li W."/>
            <person name="Harding M."/>
            <person name="Kim S."/>
            <person name="Lebrun M.-H."/>
            <person name="Bohnert H."/>
            <person name="Coughlan S."/>
            <person name="Butler J."/>
            <person name="Calvo S.E."/>
            <person name="Ma L.-J."/>
            <person name="Nicol R."/>
            <person name="Purcell S."/>
            <person name="Nusbaum C."/>
            <person name="Galagan J.E."/>
            <person name="Birren B.W."/>
        </authorList>
    </citation>
    <scope>NUCLEOTIDE SEQUENCE [LARGE SCALE GENOMIC DNA]</scope>
    <source>
        <strain>70-15 / ATCC MYA-4617 / FGSC 8958</strain>
    </source>
</reference>
<reference key="2">
    <citation type="journal article" date="2023" name="Plant Commun.">
        <title>MoLrp1-mediated signaling induces nuclear accumulation of MoMsn2 to facilitate fatty acid oxidation for infectious growth of the rice blast fungus.</title>
        <authorList>
            <person name="Zhang T."/>
            <person name="Wang X."/>
            <person name="Li X."/>
            <person name="Li Y.N."/>
            <person name="Li Y."/>
            <person name="Wu S."/>
            <person name="Xu L."/>
            <person name="Zhou R."/>
            <person name="Yang J."/>
            <person name="Li G."/>
            <person name="Liu X."/>
            <person name="Zheng X."/>
            <person name="Zhang Z."/>
            <person name="Zhang H."/>
        </authorList>
    </citation>
    <scope>FUNCTION</scope>
    <scope>INDUCTION</scope>
    <scope>DISRUPTION PHENOTYPE</scope>
    <scope>SUBCELLULAR LOCATION</scope>
</reference>
<dbReference type="EC" id="5.3.3.21" evidence="6"/>
<dbReference type="EMBL" id="CM001235">
    <property type="protein sequence ID" value="EHA49138.1"/>
    <property type="molecule type" value="Genomic_DNA"/>
</dbReference>
<dbReference type="RefSeq" id="XP_003718722.1">
    <property type="nucleotide sequence ID" value="XM_003718674.1"/>
</dbReference>
<dbReference type="SMR" id="G4NCP4"/>
<dbReference type="FunCoup" id="G4NCP4">
    <property type="interactions" value="207"/>
</dbReference>
<dbReference type="STRING" id="242507.G4NCP4"/>
<dbReference type="EnsemblFungi" id="MGG_00359T0">
    <property type="protein sequence ID" value="MGG_00359T0"/>
    <property type="gene ID" value="MGG_00359"/>
</dbReference>
<dbReference type="GeneID" id="2675176"/>
<dbReference type="KEGG" id="mgr:MGG_00359"/>
<dbReference type="VEuPathDB" id="FungiDB:MGG_00359"/>
<dbReference type="eggNOG" id="KOG0016">
    <property type="taxonomic scope" value="Eukaryota"/>
</dbReference>
<dbReference type="HOGENOM" id="CLU_009834_6_2_1"/>
<dbReference type="InParanoid" id="G4NCP4"/>
<dbReference type="OMA" id="FQAIMDF"/>
<dbReference type="OrthoDB" id="448450at2759"/>
<dbReference type="UniPathway" id="UPA00659"/>
<dbReference type="Proteomes" id="UP000009058">
    <property type="component" value="Chromosome 5"/>
</dbReference>
<dbReference type="GO" id="GO:0005782">
    <property type="term" value="C:peroxisomal matrix"/>
    <property type="evidence" value="ECO:0007669"/>
    <property type="project" value="TreeGrafter"/>
</dbReference>
<dbReference type="GO" id="GO:0004165">
    <property type="term" value="F:delta(3)-delta(2)-enoyl-CoA isomerase activity"/>
    <property type="evidence" value="ECO:0007669"/>
    <property type="project" value="UniProtKB-ARBA"/>
</dbReference>
<dbReference type="GO" id="GO:0006635">
    <property type="term" value="P:fatty acid beta-oxidation"/>
    <property type="evidence" value="ECO:0007669"/>
    <property type="project" value="TreeGrafter"/>
</dbReference>
<dbReference type="CDD" id="cd06558">
    <property type="entry name" value="crotonase-like"/>
    <property type="match status" value="1"/>
</dbReference>
<dbReference type="FunFam" id="3.90.226.10:FF:000048">
    <property type="entry name" value="3,2-trans-enoyl-CoA isomerase"/>
    <property type="match status" value="1"/>
</dbReference>
<dbReference type="Gene3D" id="3.90.226.10">
    <property type="entry name" value="2-enoyl-CoA Hydratase, Chain A, domain 1"/>
    <property type="match status" value="1"/>
</dbReference>
<dbReference type="InterPro" id="IPR029045">
    <property type="entry name" value="ClpP/crotonase-like_dom_sf"/>
</dbReference>
<dbReference type="InterPro" id="IPR051053">
    <property type="entry name" value="ECH/Chromodomain_protein"/>
</dbReference>
<dbReference type="InterPro" id="IPR001753">
    <property type="entry name" value="Enoyl-CoA_hydra/iso"/>
</dbReference>
<dbReference type="PANTHER" id="PTHR43684">
    <property type="match status" value="1"/>
</dbReference>
<dbReference type="PANTHER" id="PTHR43684:SF1">
    <property type="entry name" value="ENOYL-COA DELTA ISOMERASE 2"/>
    <property type="match status" value="1"/>
</dbReference>
<dbReference type="Pfam" id="PF00378">
    <property type="entry name" value="ECH_1"/>
    <property type="match status" value="1"/>
</dbReference>
<dbReference type="SUPFAM" id="SSF52096">
    <property type="entry name" value="ClpP/crotonase"/>
    <property type="match status" value="1"/>
</dbReference>
<organism>
    <name type="scientific">Pyricularia oryzae (strain 70-15 / ATCC MYA-4617 / FGSC 8958)</name>
    <name type="common">Rice blast fungus</name>
    <name type="synonym">Magnaporthe oryzae</name>
    <dbReference type="NCBI Taxonomy" id="242507"/>
    <lineage>
        <taxon>Eukaryota</taxon>
        <taxon>Fungi</taxon>
        <taxon>Dikarya</taxon>
        <taxon>Ascomycota</taxon>
        <taxon>Pezizomycotina</taxon>
        <taxon>Sordariomycetes</taxon>
        <taxon>Sordariomycetidae</taxon>
        <taxon>Magnaporthales</taxon>
        <taxon>Pyriculariaceae</taxon>
        <taxon>Pyricularia</taxon>
    </lineage>
</organism>
<sequence length="280" mass="30644">MSGVTTVEYRGRVAVITICNERKLNALDLHGYYELSERMREVATHDEVYVTLLTAKGRFFSAGADVSTIRDPPTTGEDDSGIADGGRRQWLQSFVAFNLNITQAFYSHPKILVVGLNGPVVGLSAALVSFADFIYATPSTFLLTPFSSLGLVAEGGASRALVQRLGVSKANEALLMSRRVPADELLQTGFVNKVFTELKGAKDDDVRFKELVLAEIDDKLGDHLVGDSLIGIKELIRRPEIDVLEGQNAREVFAGLGRFMSGVPQREFLKLASGEKRHKL</sequence>